<gene>
    <name type="primary">fta4</name>
    <name type="synonym">sma4</name>
    <name type="ORF">SPCC1393.04</name>
</gene>
<accession>O94716</accession>
<keyword id="KW-0131">Cell cycle</keyword>
<keyword id="KW-0132">Cell division</keyword>
<keyword id="KW-0137">Centromere</keyword>
<keyword id="KW-0158">Chromosome</keyword>
<keyword id="KW-0159">Chromosome partition</keyword>
<keyword id="KW-0995">Kinetochore</keyword>
<keyword id="KW-0493">Microtubule</keyword>
<keyword id="KW-0498">Mitosis</keyword>
<keyword id="KW-0539">Nucleus</keyword>
<keyword id="KW-0597">Phosphoprotein</keyword>
<keyword id="KW-1185">Reference proteome</keyword>
<organism>
    <name type="scientific">Schizosaccharomyces pombe (strain 972 / ATCC 24843)</name>
    <name type="common">Fission yeast</name>
    <dbReference type="NCBI Taxonomy" id="284812"/>
    <lineage>
        <taxon>Eukaryota</taxon>
        <taxon>Fungi</taxon>
        <taxon>Dikarya</taxon>
        <taxon>Ascomycota</taxon>
        <taxon>Taphrinomycotina</taxon>
        <taxon>Schizosaccharomycetes</taxon>
        <taxon>Schizosaccharomycetales</taxon>
        <taxon>Schizosaccharomycetaceae</taxon>
        <taxon>Schizosaccharomyces</taxon>
    </lineage>
</organism>
<dbReference type="EMBL" id="CU329672">
    <property type="protein sequence ID" value="CAB38160.1"/>
    <property type="molecule type" value="Genomic_DNA"/>
</dbReference>
<dbReference type="PIR" id="T40952">
    <property type="entry name" value="T40952"/>
</dbReference>
<dbReference type="RefSeq" id="NP_587962.1">
    <property type="nucleotide sequence ID" value="NM_001022953.2"/>
</dbReference>
<dbReference type="SMR" id="O94716"/>
<dbReference type="BioGRID" id="275303">
    <property type="interactions" value="8"/>
</dbReference>
<dbReference type="FunCoup" id="O94716">
    <property type="interactions" value="4"/>
</dbReference>
<dbReference type="STRING" id="284812.O94716"/>
<dbReference type="iPTMnet" id="O94716"/>
<dbReference type="PaxDb" id="4896-SPCC1393.04.1"/>
<dbReference type="EnsemblFungi" id="SPCC1393.04.1">
    <property type="protein sequence ID" value="SPCC1393.04.1:pep"/>
    <property type="gene ID" value="SPCC1393.04"/>
</dbReference>
<dbReference type="GeneID" id="2538719"/>
<dbReference type="KEGG" id="spo:2538719"/>
<dbReference type="PomBase" id="SPCC1393.04">
    <property type="gene designation" value="fta4"/>
</dbReference>
<dbReference type="VEuPathDB" id="FungiDB:SPCC1393.04"/>
<dbReference type="eggNOG" id="ENOG502S9QD">
    <property type="taxonomic scope" value="Eukaryota"/>
</dbReference>
<dbReference type="HOGENOM" id="CLU_1190479_0_0_1"/>
<dbReference type="InParanoid" id="O94716"/>
<dbReference type="OMA" id="KQHNRIV"/>
<dbReference type="PhylomeDB" id="O94716"/>
<dbReference type="PRO" id="PR:O94716"/>
<dbReference type="Proteomes" id="UP000002485">
    <property type="component" value="Chromosome III"/>
</dbReference>
<dbReference type="GO" id="GO:0005737">
    <property type="term" value="C:cytoplasm"/>
    <property type="evidence" value="ECO:0007005"/>
    <property type="project" value="PomBase"/>
</dbReference>
<dbReference type="GO" id="GO:0000776">
    <property type="term" value="C:kinetochore"/>
    <property type="evidence" value="ECO:0000314"/>
    <property type="project" value="PomBase"/>
</dbReference>
<dbReference type="GO" id="GO:0005874">
    <property type="term" value="C:microtubule"/>
    <property type="evidence" value="ECO:0007669"/>
    <property type="project" value="UniProtKB-KW"/>
</dbReference>
<dbReference type="GO" id="GO:0031511">
    <property type="term" value="C:Mis6-Sim4 complex"/>
    <property type="evidence" value="ECO:0000314"/>
    <property type="project" value="PomBase"/>
</dbReference>
<dbReference type="GO" id="GO:0005634">
    <property type="term" value="C:nucleus"/>
    <property type="evidence" value="ECO:0000305"/>
    <property type="project" value="PomBase"/>
</dbReference>
<dbReference type="GO" id="GO:0051301">
    <property type="term" value="P:cell division"/>
    <property type="evidence" value="ECO:0007669"/>
    <property type="project" value="UniProtKB-KW"/>
</dbReference>
<dbReference type="GO" id="GO:0000070">
    <property type="term" value="P:mitotic sister chromatid segregation"/>
    <property type="evidence" value="ECO:0000305"/>
    <property type="project" value="PomBase"/>
</dbReference>
<dbReference type="InterPro" id="IPR025207">
    <property type="entry name" value="Sim4_Fta4"/>
</dbReference>
<dbReference type="PANTHER" id="PTHR42040">
    <property type="entry name" value="INNER KINETOCHORE SUBUNIT FTA4"/>
    <property type="match status" value="1"/>
</dbReference>
<dbReference type="PANTHER" id="PTHR42040:SF1">
    <property type="entry name" value="INNER KINETOCHORE SUBUNIT FTA4"/>
    <property type="match status" value="1"/>
</dbReference>
<dbReference type="Pfam" id="PF13093">
    <property type="entry name" value="FTA4"/>
    <property type="match status" value="1"/>
</dbReference>
<name>NKP1_SCHPO</name>
<comment type="function">
    <text evidence="1">Component of the kinetochore, a multiprotein complex that assembles on centromeric DNA and attaches chromosomes to spindle microtubules, mediating chromosome segregation and sister chromatid segregation during meiosis and mitosis. Component of the inner kinetochore constitutive centromere-associated network (CCAN), which serves as a structural platform for outer kinetochore assembly (PubMed:16079914). Fta2, fta3 and fta4 associate with the central core (cnt) and inner repeat (inr) region of the centromere (PubMed:16079914).</text>
</comment>
<comment type="subunit">
    <text evidence="1">Component of the inner kinetochore constitutive centromere-associated network (CCAN) (also known as central kinetochore Sim4 complex in fission yeast), which is composed of at least cnl2, cnp3, cnp20, fta1, fta2, fta3, fta4, fta6, fta7, mal2, mhf1, mhf2, mis6, mis15, mis17, sim4 and wip1.</text>
</comment>
<comment type="subcellular location">
    <subcellularLocation>
        <location>Nucleus</location>
    </subcellularLocation>
    <subcellularLocation>
        <location>Chromosome</location>
        <location>Centromere</location>
        <location>Kinetochore</location>
    </subcellularLocation>
</comment>
<comment type="similarity">
    <text evidence="3">Belongs to the NKP1 family.</text>
</comment>
<protein>
    <recommendedName>
        <fullName>Inner kinetochore subunit fta4</fullName>
    </recommendedName>
    <alternativeName>
        <fullName>Constitutive centromere-associated network protein fta4</fullName>
    </alternativeName>
    <alternativeName>
        <fullName>Sim4 complex subunit fta4</fullName>
    </alternativeName>
    <alternativeName>
        <fullName>Sim4-mal2-associated protein 4</fullName>
    </alternativeName>
</protein>
<reference key="1">
    <citation type="journal article" date="2002" name="Nature">
        <title>The genome sequence of Schizosaccharomyces pombe.</title>
        <authorList>
            <person name="Wood V."/>
            <person name="Gwilliam R."/>
            <person name="Rajandream M.A."/>
            <person name="Lyne M.H."/>
            <person name="Lyne R."/>
            <person name="Stewart A."/>
            <person name="Sgouros J.G."/>
            <person name="Peat N."/>
            <person name="Hayles J."/>
            <person name="Baker S.G."/>
            <person name="Basham D."/>
            <person name="Bowman S."/>
            <person name="Brooks K."/>
            <person name="Brown D."/>
            <person name="Brown S."/>
            <person name="Chillingworth T."/>
            <person name="Churcher C.M."/>
            <person name="Collins M."/>
            <person name="Connor R."/>
            <person name="Cronin A."/>
            <person name="Davis P."/>
            <person name="Feltwell T."/>
            <person name="Fraser A."/>
            <person name="Gentles S."/>
            <person name="Goble A."/>
            <person name="Hamlin N."/>
            <person name="Harris D.E."/>
            <person name="Hidalgo J."/>
            <person name="Hodgson G."/>
            <person name="Holroyd S."/>
            <person name="Hornsby T."/>
            <person name="Howarth S."/>
            <person name="Huckle E.J."/>
            <person name="Hunt S."/>
            <person name="Jagels K."/>
            <person name="James K.D."/>
            <person name="Jones L."/>
            <person name="Jones M."/>
            <person name="Leather S."/>
            <person name="McDonald S."/>
            <person name="McLean J."/>
            <person name="Mooney P."/>
            <person name="Moule S."/>
            <person name="Mungall K.L."/>
            <person name="Murphy L.D."/>
            <person name="Niblett D."/>
            <person name="Odell C."/>
            <person name="Oliver K."/>
            <person name="O'Neil S."/>
            <person name="Pearson D."/>
            <person name="Quail M.A."/>
            <person name="Rabbinowitsch E."/>
            <person name="Rutherford K.M."/>
            <person name="Rutter S."/>
            <person name="Saunders D."/>
            <person name="Seeger K."/>
            <person name="Sharp S."/>
            <person name="Skelton J."/>
            <person name="Simmonds M.N."/>
            <person name="Squares R."/>
            <person name="Squares S."/>
            <person name="Stevens K."/>
            <person name="Taylor K."/>
            <person name="Taylor R.G."/>
            <person name="Tivey A."/>
            <person name="Walsh S.V."/>
            <person name="Warren T."/>
            <person name="Whitehead S."/>
            <person name="Woodward J.R."/>
            <person name="Volckaert G."/>
            <person name="Aert R."/>
            <person name="Robben J."/>
            <person name="Grymonprez B."/>
            <person name="Weltjens I."/>
            <person name="Vanstreels E."/>
            <person name="Rieger M."/>
            <person name="Schaefer M."/>
            <person name="Mueller-Auer S."/>
            <person name="Gabel C."/>
            <person name="Fuchs M."/>
            <person name="Duesterhoeft A."/>
            <person name="Fritzc C."/>
            <person name="Holzer E."/>
            <person name="Moestl D."/>
            <person name="Hilbert H."/>
            <person name="Borzym K."/>
            <person name="Langer I."/>
            <person name="Beck A."/>
            <person name="Lehrach H."/>
            <person name="Reinhardt R."/>
            <person name="Pohl T.M."/>
            <person name="Eger P."/>
            <person name="Zimmermann W."/>
            <person name="Wedler H."/>
            <person name="Wambutt R."/>
            <person name="Purnelle B."/>
            <person name="Goffeau A."/>
            <person name="Cadieu E."/>
            <person name="Dreano S."/>
            <person name="Gloux S."/>
            <person name="Lelaure V."/>
            <person name="Mottier S."/>
            <person name="Galibert F."/>
            <person name="Aves S.J."/>
            <person name="Xiang Z."/>
            <person name="Hunt C."/>
            <person name="Moore K."/>
            <person name="Hurst S.M."/>
            <person name="Lucas M."/>
            <person name="Rochet M."/>
            <person name="Gaillardin C."/>
            <person name="Tallada V.A."/>
            <person name="Garzon A."/>
            <person name="Thode G."/>
            <person name="Daga R.R."/>
            <person name="Cruzado L."/>
            <person name="Jimenez J."/>
            <person name="Sanchez M."/>
            <person name="del Rey F."/>
            <person name="Benito J."/>
            <person name="Dominguez A."/>
            <person name="Revuelta J.L."/>
            <person name="Moreno S."/>
            <person name="Armstrong J."/>
            <person name="Forsburg S.L."/>
            <person name="Cerutti L."/>
            <person name="Lowe T."/>
            <person name="McCombie W.R."/>
            <person name="Paulsen I."/>
            <person name="Potashkin J."/>
            <person name="Shpakovski G.V."/>
            <person name="Ussery D."/>
            <person name="Barrell B.G."/>
            <person name="Nurse P."/>
        </authorList>
    </citation>
    <scope>NUCLEOTIDE SEQUENCE [LARGE SCALE GENOMIC DNA]</scope>
    <source>
        <strain>972 / ATCC 24843</strain>
    </source>
</reference>
<reference key="2">
    <citation type="journal article" date="2005" name="EMBO J.">
        <title>Molecular analysis of kinetochore architecture in fission yeast.</title>
        <authorList>
            <person name="Liu X."/>
            <person name="McLeod I."/>
            <person name="Anderson S."/>
            <person name="Yates J.R. III"/>
            <person name="He X."/>
        </authorList>
    </citation>
    <scope>FUNCTION</scope>
    <scope>IDENTIFICATION IN THE SIM4 COMPLEX</scope>
    <scope>SUBCELLULAR LOCATION</scope>
</reference>
<reference key="3">
    <citation type="journal article" date="2006" name="Nat. Biotechnol.">
        <title>ORFeome cloning and global analysis of protein localization in the fission yeast Schizosaccharomyces pombe.</title>
        <authorList>
            <person name="Matsuyama A."/>
            <person name="Arai R."/>
            <person name="Yashiroda Y."/>
            <person name="Shirai A."/>
            <person name="Kamata A."/>
            <person name="Sekido S."/>
            <person name="Kobayashi Y."/>
            <person name="Hashimoto A."/>
            <person name="Hamamoto M."/>
            <person name="Hiraoka Y."/>
            <person name="Horinouchi S."/>
            <person name="Yoshida M."/>
        </authorList>
    </citation>
    <scope>SUBCELLULAR LOCATION [LARGE SCALE ANALYSIS]</scope>
</reference>
<reference key="4">
    <citation type="journal article" date="2008" name="J. Proteome Res.">
        <title>Phosphoproteome analysis of fission yeast.</title>
        <authorList>
            <person name="Wilson-Grady J.T."/>
            <person name="Villen J."/>
            <person name="Gygi S.P."/>
        </authorList>
    </citation>
    <scope>PHOSPHORYLATION [LARGE SCALE ANALYSIS] AT THR-189 AND THR-191</scope>
    <scope>IDENTIFICATION BY MASS SPECTROMETRY</scope>
</reference>
<sequence>MDIYEHKKSFMERQIRLLNRPMRPPKDWKLPLKSGQLSESVVETVFQRLQLRIQKHAKLNYSHQATQHVAAQIRKLYEQNSAIEDITFLNPLFYGEIDLSNLDSVKSLPHPWPFQKESRPVEKDEEQEKFNRLTGELLGLLTTLSELEQERSELEQIEKMLEPFEDGPSSIHTNMWKKNPELISTLNSTNTMVAKINSLLRGVSFPSLNNDNQEASLEDEIRSQLFEKTISDD</sequence>
<evidence type="ECO:0000269" key="1">
    <source>
    </source>
</evidence>
<evidence type="ECO:0000269" key="2">
    <source>
    </source>
</evidence>
<evidence type="ECO:0000305" key="3"/>
<proteinExistence type="evidence at protein level"/>
<feature type="chain" id="PRO_0000290640" description="Inner kinetochore subunit fta4">
    <location>
        <begin position="1"/>
        <end position="233"/>
    </location>
</feature>
<feature type="modified residue" description="Phosphothreonine" evidence="2">
    <location>
        <position position="189"/>
    </location>
</feature>
<feature type="modified residue" description="Phosphothreonine" evidence="2">
    <location>
        <position position="191"/>
    </location>
</feature>